<comment type="function">
    <text evidence="1">Specifically methylates the N4 position of cytidine in position 1402 (C1402) of 16S rRNA.</text>
</comment>
<comment type="catalytic activity">
    <reaction evidence="1">
        <text>cytidine(1402) in 16S rRNA + S-adenosyl-L-methionine = N(4)-methylcytidine(1402) in 16S rRNA + S-adenosyl-L-homocysteine + H(+)</text>
        <dbReference type="Rhea" id="RHEA:42928"/>
        <dbReference type="Rhea" id="RHEA-COMP:10286"/>
        <dbReference type="Rhea" id="RHEA-COMP:10287"/>
        <dbReference type="ChEBI" id="CHEBI:15378"/>
        <dbReference type="ChEBI" id="CHEBI:57856"/>
        <dbReference type="ChEBI" id="CHEBI:59789"/>
        <dbReference type="ChEBI" id="CHEBI:74506"/>
        <dbReference type="ChEBI" id="CHEBI:82748"/>
        <dbReference type="EC" id="2.1.1.199"/>
    </reaction>
</comment>
<comment type="subcellular location">
    <subcellularLocation>
        <location evidence="1">Cytoplasm</location>
    </subcellularLocation>
</comment>
<comment type="similarity">
    <text evidence="1">Belongs to the methyltransferase superfamily. RsmH family.</text>
</comment>
<keyword id="KW-0963">Cytoplasm</keyword>
<keyword id="KW-0489">Methyltransferase</keyword>
<keyword id="KW-0698">rRNA processing</keyword>
<keyword id="KW-0949">S-adenosyl-L-methionine</keyword>
<keyword id="KW-0808">Transferase</keyword>
<sequence>MMENFKHTTVLLDEAVNGLNIRPDGIYIDGTFGRGGHSRLILSQLGEEGRLLAIDRDPQAIAVAQTINDPRFSIIHGPFSALADYVAERELTGKIDGILLDLGVSSPQLDDAERGFSFMRDGPLDMRMDPTRGQSAAEWLQTAEEADIAWVLKTFGEERFAKRIARAIVERNREQPMTRTKELAEVVAAATPVKDKFKHPATRTFQAVRIWVNSELEEIEQALKSSLSVLAPGGRLSIISFHSLEDRIVKRFMREQSRGPQVPAGLPMTEAQLKKLGGRELRALGKLMPGEKEVAENPRARSSVLRIAERTNA</sequence>
<accession>B5R2L6</accession>
<organism>
    <name type="scientific">Salmonella enteritidis PT4 (strain P125109)</name>
    <dbReference type="NCBI Taxonomy" id="550537"/>
    <lineage>
        <taxon>Bacteria</taxon>
        <taxon>Pseudomonadati</taxon>
        <taxon>Pseudomonadota</taxon>
        <taxon>Gammaproteobacteria</taxon>
        <taxon>Enterobacterales</taxon>
        <taxon>Enterobacteriaceae</taxon>
        <taxon>Salmonella</taxon>
    </lineage>
</organism>
<feature type="chain" id="PRO_0000387100" description="Ribosomal RNA small subunit methyltransferase H">
    <location>
        <begin position="1"/>
        <end position="313"/>
    </location>
</feature>
<feature type="binding site" evidence="1">
    <location>
        <begin position="35"/>
        <end position="37"/>
    </location>
    <ligand>
        <name>S-adenosyl-L-methionine</name>
        <dbReference type="ChEBI" id="CHEBI:59789"/>
    </ligand>
</feature>
<feature type="binding site" evidence="1">
    <location>
        <position position="55"/>
    </location>
    <ligand>
        <name>S-adenosyl-L-methionine</name>
        <dbReference type="ChEBI" id="CHEBI:59789"/>
    </ligand>
</feature>
<feature type="binding site" evidence="1">
    <location>
        <position position="79"/>
    </location>
    <ligand>
        <name>S-adenosyl-L-methionine</name>
        <dbReference type="ChEBI" id="CHEBI:59789"/>
    </ligand>
</feature>
<feature type="binding site" evidence="1">
    <location>
        <position position="101"/>
    </location>
    <ligand>
        <name>S-adenosyl-L-methionine</name>
        <dbReference type="ChEBI" id="CHEBI:59789"/>
    </ligand>
</feature>
<feature type="binding site" evidence="1">
    <location>
        <position position="108"/>
    </location>
    <ligand>
        <name>S-adenosyl-L-methionine</name>
        <dbReference type="ChEBI" id="CHEBI:59789"/>
    </ligand>
</feature>
<gene>
    <name evidence="1" type="primary">rsmH</name>
    <name type="synonym">mraW</name>
    <name type="ordered locus">SEN0121</name>
</gene>
<evidence type="ECO:0000255" key="1">
    <source>
        <dbReference type="HAMAP-Rule" id="MF_01007"/>
    </source>
</evidence>
<reference key="1">
    <citation type="journal article" date="2008" name="Genome Res.">
        <title>Comparative genome analysis of Salmonella enteritidis PT4 and Salmonella gallinarum 287/91 provides insights into evolutionary and host adaptation pathways.</title>
        <authorList>
            <person name="Thomson N.R."/>
            <person name="Clayton D.J."/>
            <person name="Windhorst D."/>
            <person name="Vernikos G."/>
            <person name="Davidson S."/>
            <person name="Churcher C."/>
            <person name="Quail M.A."/>
            <person name="Stevens M."/>
            <person name="Jones M.A."/>
            <person name="Watson M."/>
            <person name="Barron A."/>
            <person name="Layton A."/>
            <person name="Pickard D."/>
            <person name="Kingsley R.A."/>
            <person name="Bignell A."/>
            <person name="Clark L."/>
            <person name="Harris B."/>
            <person name="Ormond D."/>
            <person name="Abdellah Z."/>
            <person name="Brooks K."/>
            <person name="Cherevach I."/>
            <person name="Chillingworth T."/>
            <person name="Woodward J."/>
            <person name="Norberczak H."/>
            <person name="Lord A."/>
            <person name="Arrowsmith C."/>
            <person name="Jagels K."/>
            <person name="Moule S."/>
            <person name="Mungall K."/>
            <person name="Saunders M."/>
            <person name="Whitehead S."/>
            <person name="Chabalgoity J.A."/>
            <person name="Maskell D."/>
            <person name="Humphreys T."/>
            <person name="Roberts M."/>
            <person name="Barrow P.A."/>
            <person name="Dougan G."/>
            <person name="Parkhill J."/>
        </authorList>
    </citation>
    <scope>NUCLEOTIDE SEQUENCE [LARGE SCALE GENOMIC DNA]</scope>
    <source>
        <strain>P125109</strain>
    </source>
</reference>
<dbReference type="EC" id="2.1.1.199" evidence="1"/>
<dbReference type="EMBL" id="AM933172">
    <property type="protein sequence ID" value="CAR31710.1"/>
    <property type="molecule type" value="Genomic_DNA"/>
</dbReference>
<dbReference type="RefSeq" id="WP_000970444.1">
    <property type="nucleotide sequence ID" value="NC_011294.1"/>
</dbReference>
<dbReference type="SMR" id="B5R2L6"/>
<dbReference type="KEGG" id="set:SEN0121"/>
<dbReference type="HOGENOM" id="CLU_038422_2_0_6"/>
<dbReference type="Proteomes" id="UP000000613">
    <property type="component" value="Chromosome"/>
</dbReference>
<dbReference type="GO" id="GO:0005737">
    <property type="term" value="C:cytoplasm"/>
    <property type="evidence" value="ECO:0007669"/>
    <property type="project" value="UniProtKB-SubCell"/>
</dbReference>
<dbReference type="GO" id="GO:0071424">
    <property type="term" value="F:rRNA (cytosine-N4-)-methyltransferase activity"/>
    <property type="evidence" value="ECO:0007669"/>
    <property type="project" value="UniProtKB-UniRule"/>
</dbReference>
<dbReference type="GO" id="GO:0070475">
    <property type="term" value="P:rRNA base methylation"/>
    <property type="evidence" value="ECO:0007669"/>
    <property type="project" value="UniProtKB-UniRule"/>
</dbReference>
<dbReference type="FunFam" id="1.10.150.170:FF:000001">
    <property type="entry name" value="Ribosomal RNA small subunit methyltransferase H"/>
    <property type="match status" value="1"/>
</dbReference>
<dbReference type="Gene3D" id="1.10.150.170">
    <property type="entry name" value="Putative methyltransferase TM0872, insert domain"/>
    <property type="match status" value="1"/>
</dbReference>
<dbReference type="Gene3D" id="3.40.50.150">
    <property type="entry name" value="Vaccinia Virus protein VP39"/>
    <property type="match status" value="1"/>
</dbReference>
<dbReference type="HAMAP" id="MF_01007">
    <property type="entry name" value="16SrRNA_methyltr_H"/>
    <property type="match status" value="1"/>
</dbReference>
<dbReference type="InterPro" id="IPR002903">
    <property type="entry name" value="RsmH"/>
</dbReference>
<dbReference type="InterPro" id="IPR023397">
    <property type="entry name" value="SAM-dep_MeTrfase_MraW_recog"/>
</dbReference>
<dbReference type="InterPro" id="IPR029063">
    <property type="entry name" value="SAM-dependent_MTases_sf"/>
</dbReference>
<dbReference type="NCBIfam" id="TIGR00006">
    <property type="entry name" value="16S rRNA (cytosine(1402)-N(4))-methyltransferase RsmH"/>
    <property type="match status" value="1"/>
</dbReference>
<dbReference type="PANTHER" id="PTHR11265:SF0">
    <property type="entry name" value="12S RRNA N4-METHYLCYTIDINE METHYLTRANSFERASE"/>
    <property type="match status" value="1"/>
</dbReference>
<dbReference type="PANTHER" id="PTHR11265">
    <property type="entry name" value="S-ADENOSYL-METHYLTRANSFERASE MRAW"/>
    <property type="match status" value="1"/>
</dbReference>
<dbReference type="Pfam" id="PF01795">
    <property type="entry name" value="Methyltransf_5"/>
    <property type="match status" value="1"/>
</dbReference>
<dbReference type="PIRSF" id="PIRSF004486">
    <property type="entry name" value="MraW"/>
    <property type="match status" value="1"/>
</dbReference>
<dbReference type="SUPFAM" id="SSF81799">
    <property type="entry name" value="Putative methyltransferase TM0872, insert domain"/>
    <property type="match status" value="1"/>
</dbReference>
<dbReference type="SUPFAM" id="SSF53335">
    <property type="entry name" value="S-adenosyl-L-methionine-dependent methyltransferases"/>
    <property type="match status" value="1"/>
</dbReference>
<protein>
    <recommendedName>
        <fullName evidence="1">Ribosomal RNA small subunit methyltransferase H</fullName>
        <ecNumber evidence="1">2.1.1.199</ecNumber>
    </recommendedName>
    <alternativeName>
        <fullName evidence="1">16S rRNA m(4)C1402 methyltransferase</fullName>
    </alternativeName>
    <alternativeName>
        <fullName evidence="1">rRNA (cytosine-N(4)-)-methyltransferase RsmH</fullName>
    </alternativeName>
</protein>
<proteinExistence type="inferred from homology"/>
<name>RSMH_SALEP</name>